<organismHost>
    <name type="scientific">Escherichia coli</name>
    <dbReference type="NCBI Taxonomy" id="562"/>
</organismHost>
<proteinExistence type="predicted"/>
<gene>
    <name type="primary">y04D</name>
    <name type="synonym">55.4</name>
</gene>
<organism>
    <name type="scientific">Enterobacteria phage T4</name>
    <name type="common">Bacteriophage T4</name>
    <dbReference type="NCBI Taxonomy" id="10665"/>
    <lineage>
        <taxon>Viruses</taxon>
        <taxon>Duplodnaviria</taxon>
        <taxon>Heunggongvirae</taxon>
        <taxon>Uroviricota</taxon>
        <taxon>Caudoviricetes</taxon>
        <taxon>Straboviridae</taxon>
        <taxon>Tevenvirinae</taxon>
        <taxon>Tequatrovirus</taxon>
    </lineage>
</organism>
<accession>P07080</accession>
<reference key="1">
    <citation type="journal article" date="1987" name="Nucleic Acids Res.">
        <title>Nucleotide sequence and primary structures of gene products coded for by the T4 genome between map positions 48.266 kb and 39.166 kb.</title>
        <authorList>
            <person name="Tomaschewski J."/>
            <person name="Rueger W."/>
        </authorList>
    </citation>
    <scope>NUCLEOTIDE SEQUENCE [GENOMIC DNA]</scope>
    <source>
        <strain>C</strain>
    </source>
</reference>
<reference key="2">
    <citation type="journal article" date="2003" name="Microbiol. Mol. Biol. Rev.">
        <title>Bacteriophage T4 genome.</title>
        <authorList>
            <person name="Miller E.S."/>
            <person name="Kutter E."/>
            <person name="Mosig G."/>
            <person name="Arisaka F."/>
            <person name="Kunisawa T."/>
            <person name="Ruger W."/>
        </authorList>
    </citation>
    <scope>NUCLEOTIDE SEQUENCE [LARGE SCALE GENOMIC DNA]</scope>
</reference>
<protein>
    <recommendedName>
        <fullName>Uncharacterized 5.1 kDa protein in Gp55-nrdG intergenic region</fullName>
    </recommendedName>
</protein>
<keyword id="KW-1185">Reference proteome</keyword>
<name>Y04D_BPT4</name>
<sequence length="43" mass="5146">MNIKRMLFKQGLYTLNVTPKGDTTKWSVNDWIKFIDENGNWEI</sequence>
<feature type="chain" id="PRO_0000165107" description="Uncharacterized 5.1 kDa protein in Gp55-nrdG intergenic region">
    <location>
        <begin position="1"/>
        <end position="43"/>
    </location>
</feature>
<dbReference type="EMBL" id="Y00122">
    <property type="protein sequence ID" value="CAA68317.1"/>
    <property type="molecule type" value="Genomic_DNA"/>
</dbReference>
<dbReference type="EMBL" id="AF158101">
    <property type="protein sequence ID" value="AAD42495.1"/>
    <property type="molecule type" value="Genomic_DNA"/>
</dbReference>
<dbReference type="PIR" id="C30292">
    <property type="entry name" value="ZDBPT9"/>
</dbReference>
<dbReference type="RefSeq" id="NP_049683.1">
    <property type="nucleotide sequence ID" value="NC_000866.4"/>
</dbReference>
<dbReference type="GeneID" id="1258578"/>
<dbReference type="KEGG" id="vg:1258578"/>
<dbReference type="OrthoDB" id="25838at10239"/>
<dbReference type="Proteomes" id="UP000009087">
    <property type="component" value="Segment"/>
</dbReference>
<dbReference type="InterPro" id="IPR035141">
    <property type="entry name" value="DUF5484"/>
</dbReference>
<dbReference type="Pfam" id="PF17583">
    <property type="entry name" value="DUF5484"/>
    <property type="match status" value="1"/>
</dbReference>